<comment type="function">
    <text evidence="1">Binds directly to 23S ribosomal RNA and is necessary for the in vitro assembly process of the 50S ribosomal subunit. It is not involved in the protein synthesizing functions of that subunit.</text>
</comment>
<comment type="similarity">
    <text evidence="1">Belongs to the bacterial ribosomal protein bL20 family.</text>
</comment>
<sequence>MRVKTGTVRRRRHKKILKQAKGFYSGRRKHFRKAKEQLERSLVYAYRDRKQKKREFRKLWITRINAACRLNDISYSRFIHGLSKAGIELDRKILADMAMNEPEAFKAVVEKAKAAL</sequence>
<evidence type="ECO:0000255" key="1">
    <source>
        <dbReference type="HAMAP-Rule" id="MF_00382"/>
    </source>
</evidence>
<evidence type="ECO:0000305" key="2"/>
<reference key="1">
    <citation type="journal article" date="2007" name="Proc. Natl. Acad. Sci. U.S.A.">
        <title>Deep-sea vent epsilon-proteobacterial genomes provide insights into emergence of pathogens.</title>
        <authorList>
            <person name="Nakagawa S."/>
            <person name="Takaki Y."/>
            <person name="Shimamura S."/>
            <person name="Reysenbach A.-L."/>
            <person name="Takai K."/>
            <person name="Horikoshi K."/>
        </authorList>
    </citation>
    <scope>NUCLEOTIDE SEQUENCE [LARGE SCALE GENOMIC DNA]</scope>
    <source>
        <strain>SB155-2</strain>
    </source>
</reference>
<dbReference type="EMBL" id="AP009178">
    <property type="protein sequence ID" value="BAF69228.1"/>
    <property type="molecule type" value="Genomic_DNA"/>
</dbReference>
<dbReference type="RefSeq" id="WP_011979654.1">
    <property type="nucleotide sequence ID" value="NC_009662.1"/>
</dbReference>
<dbReference type="SMR" id="A6Q169"/>
<dbReference type="FunCoup" id="A6Q169">
    <property type="interactions" value="512"/>
</dbReference>
<dbReference type="STRING" id="387092.NIS_0111"/>
<dbReference type="KEGG" id="nis:NIS_0111"/>
<dbReference type="eggNOG" id="COG0292">
    <property type="taxonomic scope" value="Bacteria"/>
</dbReference>
<dbReference type="HOGENOM" id="CLU_123265_0_1_7"/>
<dbReference type="InParanoid" id="A6Q169"/>
<dbReference type="OrthoDB" id="9808966at2"/>
<dbReference type="Proteomes" id="UP000001118">
    <property type="component" value="Chromosome"/>
</dbReference>
<dbReference type="GO" id="GO:1990904">
    <property type="term" value="C:ribonucleoprotein complex"/>
    <property type="evidence" value="ECO:0007669"/>
    <property type="project" value="UniProtKB-KW"/>
</dbReference>
<dbReference type="GO" id="GO:0005840">
    <property type="term" value="C:ribosome"/>
    <property type="evidence" value="ECO:0007669"/>
    <property type="project" value="UniProtKB-KW"/>
</dbReference>
<dbReference type="GO" id="GO:0019843">
    <property type="term" value="F:rRNA binding"/>
    <property type="evidence" value="ECO:0007669"/>
    <property type="project" value="UniProtKB-UniRule"/>
</dbReference>
<dbReference type="GO" id="GO:0003735">
    <property type="term" value="F:structural constituent of ribosome"/>
    <property type="evidence" value="ECO:0007669"/>
    <property type="project" value="InterPro"/>
</dbReference>
<dbReference type="GO" id="GO:0000027">
    <property type="term" value="P:ribosomal large subunit assembly"/>
    <property type="evidence" value="ECO:0007669"/>
    <property type="project" value="UniProtKB-UniRule"/>
</dbReference>
<dbReference type="GO" id="GO:0006412">
    <property type="term" value="P:translation"/>
    <property type="evidence" value="ECO:0007669"/>
    <property type="project" value="InterPro"/>
</dbReference>
<dbReference type="CDD" id="cd07026">
    <property type="entry name" value="Ribosomal_L20"/>
    <property type="match status" value="1"/>
</dbReference>
<dbReference type="FunFam" id="1.10.1900.20:FF:000001">
    <property type="entry name" value="50S ribosomal protein L20"/>
    <property type="match status" value="1"/>
</dbReference>
<dbReference type="Gene3D" id="6.10.160.10">
    <property type="match status" value="1"/>
</dbReference>
<dbReference type="Gene3D" id="1.10.1900.20">
    <property type="entry name" value="Ribosomal protein L20"/>
    <property type="match status" value="1"/>
</dbReference>
<dbReference type="HAMAP" id="MF_00382">
    <property type="entry name" value="Ribosomal_bL20"/>
    <property type="match status" value="1"/>
</dbReference>
<dbReference type="InterPro" id="IPR005813">
    <property type="entry name" value="Ribosomal_bL20"/>
</dbReference>
<dbReference type="InterPro" id="IPR049946">
    <property type="entry name" value="RIBOSOMAL_L20_CS"/>
</dbReference>
<dbReference type="InterPro" id="IPR035566">
    <property type="entry name" value="Ribosomal_protein_bL20_C"/>
</dbReference>
<dbReference type="NCBIfam" id="TIGR01032">
    <property type="entry name" value="rplT_bact"/>
    <property type="match status" value="1"/>
</dbReference>
<dbReference type="PANTHER" id="PTHR10986">
    <property type="entry name" value="39S RIBOSOMAL PROTEIN L20"/>
    <property type="match status" value="1"/>
</dbReference>
<dbReference type="Pfam" id="PF00453">
    <property type="entry name" value="Ribosomal_L20"/>
    <property type="match status" value="1"/>
</dbReference>
<dbReference type="PRINTS" id="PR00062">
    <property type="entry name" value="RIBOSOMALL20"/>
</dbReference>
<dbReference type="SUPFAM" id="SSF74731">
    <property type="entry name" value="Ribosomal protein L20"/>
    <property type="match status" value="1"/>
</dbReference>
<dbReference type="PROSITE" id="PS00937">
    <property type="entry name" value="RIBOSOMAL_L20"/>
    <property type="match status" value="1"/>
</dbReference>
<protein>
    <recommendedName>
        <fullName evidence="1">Large ribosomal subunit protein bL20</fullName>
    </recommendedName>
    <alternativeName>
        <fullName evidence="2">50S ribosomal protein L20</fullName>
    </alternativeName>
</protein>
<feature type="chain" id="PRO_0000355475" description="Large ribosomal subunit protein bL20">
    <location>
        <begin position="1"/>
        <end position="116"/>
    </location>
</feature>
<gene>
    <name evidence="1" type="primary">rplT</name>
    <name type="ordered locus">NIS_0111</name>
</gene>
<name>RL20_NITSB</name>
<keyword id="KW-1185">Reference proteome</keyword>
<keyword id="KW-0687">Ribonucleoprotein</keyword>
<keyword id="KW-0689">Ribosomal protein</keyword>
<keyword id="KW-0694">RNA-binding</keyword>
<keyword id="KW-0699">rRNA-binding</keyword>
<accession>A6Q169</accession>
<organism>
    <name type="scientific">Nitratiruptor sp. (strain SB155-2)</name>
    <dbReference type="NCBI Taxonomy" id="387092"/>
    <lineage>
        <taxon>Bacteria</taxon>
        <taxon>Pseudomonadati</taxon>
        <taxon>Campylobacterota</taxon>
        <taxon>Epsilonproteobacteria</taxon>
        <taxon>Nautiliales</taxon>
        <taxon>Nitratiruptoraceae</taxon>
        <taxon>Nitratiruptor</taxon>
    </lineage>
</organism>
<proteinExistence type="inferred from homology"/>